<name>RS6_BRUAB</name>
<evidence type="ECO:0000255" key="1">
    <source>
        <dbReference type="HAMAP-Rule" id="MF_00360"/>
    </source>
</evidence>
<evidence type="ECO:0000256" key="2">
    <source>
        <dbReference type="SAM" id="MobiDB-lite"/>
    </source>
</evidence>
<evidence type="ECO:0000305" key="3"/>
<organism>
    <name type="scientific">Brucella abortus biovar 1 (strain 9-941)</name>
    <dbReference type="NCBI Taxonomy" id="262698"/>
    <lineage>
        <taxon>Bacteria</taxon>
        <taxon>Pseudomonadati</taxon>
        <taxon>Pseudomonadota</taxon>
        <taxon>Alphaproteobacteria</taxon>
        <taxon>Hyphomicrobiales</taxon>
        <taxon>Brucellaceae</taxon>
        <taxon>Brucella/Ochrobactrum group</taxon>
        <taxon>Brucella</taxon>
    </lineage>
</organism>
<dbReference type="EMBL" id="AE017223">
    <property type="protein sequence ID" value="AAX73872.1"/>
    <property type="molecule type" value="Genomic_DNA"/>
</dbReference>
<dbReference type="RefSeq" id="WP_002963611.1">
    <property type="nucleotide sequence ID" value="NC_006932.1"/>
</dbReference>
<dbReference type="SMR" id="Q57ER2"/>
<dbReference type="EnsemblBacteria" id="AAX73872">
    <property type="protein sequence ID" value="AAX73872"/>
    <property type="gene ID" value="BruAb1_0477"/>
</dbReference>
<dbReference type="GeneID" id="97534175"/>
<dbReference type="KEGG" id="bmb:BruAb1_0477"/>
<dbReference type="HOGENOM" id="CLU_113441_2_0_5"/>
<dbReference type="Proteomes" id="UP000000540">
    <property type="component" value="Chromosome I"/>
</dbReference>
<dbReference type="GO" id="GO:0022627">
    <property type="term" value="C:cytosolic small ribosomal subunit"/>
    <property type="evidence" value="ECO:0007669"/>
    <property type="project" value="TreeGrafter"/>
</dbReference>
<dbReference type="GO" id="GO:0070181">
    <property type="term" value="F:small ribosomal subunit rRNA binding"/>
    <property type="evidence" value="ECO:0007669"/>
    <property type="project" value="TreeGrafter"/>
</dbReference>
<dbReference type="GO" id="GO:0003735">
    <property type="term" value="F:structural constituent of ribosome"/>
    <property type="evidence" value="ECO:0007669"/>
    <property type="project" value="InterPro"/>
</dbReference>
<dbReference type="GO" id="GO:0006412">
    <property type="term" value="P:translation"/>
    <property type="evidence" value="ECO:0007669"/>
    <property type="project" value="UniProtKB-UniRule"/>
</dbReference>
<dbReference type="CDD" id="cd00473">
    <property type="entry name" value="bS6"/>
    <property type="match status" value="1"/>
</dbReference>
<dbReference type="Gene3D" id="3.30.70.60">
    <property type="match status" value="1"/>
</dbReference>
<dbReference type="HAMAP" id="MF_00360">
    <property type="entry name" value="Ribosomal_bS6"/>
    <property type="match status" value="1"/>
</dbReference>
<dbReference type="InterPro" id="IPR000529">
    <property type="entry name" value="Ribosomal_bS6"/>
</dbReference>
<dbReference type="InterPro" id="IPR035980">
    <property type="entry name" value="Ribosomal_bS6_sf"/>
</dbReference>
<dbReference type="InterPro" id="IPR020814">
    <property type="entry name" value="Ribosomal_S6_plastid/chlpt"/>
</dbReference>
<dbReference type="InterPro" id="IPR014717">
    <property type="entry name" value="Transl_elong_EF1B/ribsomal_bS6"/>
</dbReference>
<dbReference type="NCBIfam" id="TIGR00166">
    <property type="entry name" value="S6"/>
    <property type="match status" value="1"/>
</dbReference>
<dbReference type="PANTHER" id="PTHR21011">
    <property type="entry name" value="MITOCHONDRIAL 28S RIBOSOMAL PROTEIN S6"/>
    <property type="match status" value="1"/>
</dbReference>
<dbReference type="PANTHER" id="PTHR21011:SF1">
    <property type="entry name" value="SMALL RIBOSOMAL SUBUNIT PROTEIN BS6M"/>
    <property type="match status" value="1"/>
</dbReference>
<dbReference type="Pfam" id="PF01250">
    <property type="entry name" value="Ribosomal_S6"/>
    <property type="match status" value="1"/>
</dbReference>
<dbReference type="SUPFAM" id="SSF54995">
    <property type="entry name" value="Ribosomal protein S6"/>
    <property type="match status" value="1"/>
</dbReference>
<gene>
    <name evidence="1" type="primary">rpsF</name>
    <name type="ordered locus">BruAb1_0477</name>
</gene>
<protein>
    <recommendedName>
        <fullName evidence="1">Small ribosomal subunit protein bS6</fullName>
    </recommendedName>
    <alternativeName>
        <fullName evidence="3">30S ribosomal protein S6</fullName>
    </alternativeName>
</protein>
<accession>Q57ER2</accession>
<reference key="1">
    <citation type="journal article" date="2005" name="J. Bacteriol.">
        <title>Completion of the genome sequence of Brucella abortus and comparison to the highly similar genomes of Brucella melitensis and Brucella suis.</title>
        <authorList>
            <person name="Halling S.M."/>
            <person name="Peterson-Burch B.D."/>
            <person name="Bricker B.J."/>
            <person name="Zuerner R.L."/>
            <person name="Qing Z."/>
            <person name="Li L.-L."/>
            <person name="Kapur V."/>
            <person name="Alt D.P."/>
            <person name="Olsen S.C."/>
        </authorList>
    </citation>
    <scope>NUCLEOTIDE SEQUENCE [LARGE SCALE GENOMIC DNA]</scope>
    <source>
        <strain>9-941</strain>
    </source>
</reference>
<comment type="function">
    <text evidence="1">Binds together with bS18 to 16S ribosomal RNA.</text>
</comment>
<comment type="similarity">
    <text evidence="1">Belongs to the bacterial ribosomal protein bS6 family.</text>
</comment>
<sequence>MALYEHVLLARQDISQQQVDALVEQFKGVLEANGGKFGKVENWGLRPLTYRIKKNRKAYYTLVNIDAPAAAVAEMERQMRINEDVLRFLTVRVEEHEEGQSAMLTRRDDRRERDGDDRPRRREGGFDRGDRGDRGPRRPRDNEAGEGA</sequence>
<feature type="chain" id="PRO_0000229526" description="Small ribosomal subunit protein bS6">
    <location>
        <begin position="1"/>
        <end position="148"/>
    </location>
</feature>
<feature type="region of interest" description="Disordered" evidence="2">
    <location>
        <begin position="96"/>
        <end position="148"/>
    </location>
</feature>
<proteinExistence type="inferred from homology"/>
<keyword id="KW-0687">Ribonucleoprotein</keyword>
<keyword id="KW-0689">Ribosomal protein</keyword>
<keyword id="KW-0694">RNA-binding</keyword>
<keyword id="KW-0699">rRNA-binding</keyword>